<reference key="1">
    <citation type="submission" date="2007-11" db="EMBL/GenBank/DDBJ databases">
        <authorList>
            <consortium name="The Salmonella enterica serovar Paratyphi B Genome Sequencing Project"/>
            <person name="McClelland M."/>
            <person name="Sanderson E.K."/>
            <person name="Porwollik S."/>
            <person name="Spieth J."/>
            <person name="Clifton W.S."/>
            <person name="Fulton R."/>
            <person name="Cordes M."/>
            <person name="Wollam A."/>
            <person name="Shah N."/>
            <person name="Pepin K."/>
            <person name="Bhonagiri V."/>
            <person name="Nash W."/>
            <person name="Johnson M."/>
            <person name="Thiruvilangam P."/>
            <person name="Wilson R."/>
        </authorList>
    </citation>
    <scope>NUCLEOTIDE SEQUENCE [LARGE SCALE GENOMIC DNA]</scope>
    <source>
        <strain>ATCC BAA-1250 / SPB7</strain>
    </source>
</reference>
<evidence type="ECO:0000255" key="1">
    <source>
        <dbReference type="HAMAP-Rule" id="MF_00331"/>
    </source>
</evidence>
<protein>
    <recommendedName>
        <fullName evidence="1">Cysteine desulfurase IscS</fullName>
        <ecNumber evidence="1">2.8.1.7</ecNumber>
    </recommendedName>
</protein>
<dbReference type="EC" id="2.8.1.7" evidence="1"/>
<dbReference type="EMBL" id="CP000886">
    <property type="protein sequence ID" value="ABX65825.1"/>
    <property type="molecule type" value="Genomic_DNA"/>
</dbReference>
<dbReference type="RefSeq" id="WP_000775263.1">
    <property type="nucleotide sequence ID" value="NC_010102.1"/>
</dbReference>
<dbReference type="BMRB" id="A9N1X5"/>
<dbReference type="SMR" id="A9N1X5"/>
<dbReference type="KEGG" id="spq:SPAB_00390"/>
<dbReference type="PATRIC" id="fig|1016998.12.peg.368"/>
<dbReference type="HOGENOM" id="CLU_003433_0_2_6"/>
<dbReference type="BioCyc" id="SENT1016998:SPAB_RS01600-MONOMER"/>
<dbReference type="UniPathway" id="UPA00266"/>
<dbReference type="Proteomes" id="UP000008556">
    <property type="component" value="Chromosome"/>
</dbReference>
<dbReference type="GO" id="GO:1990221">
    <property type="term" value="C:L-cysteine desulfurase complex"/>
    <property type="evidence" value="ECO:0007669"/>
    <property type="project" value="UniProtKB-ARBA"/>
</dbReference>
<dbReference type="GO" id="GO:0051537">
    <property type="term" value="F:2 iron, 2 sulfur cluster binding"/>
    <property type="evidence" value="ECO:0007669"/>
    <property type="project" value="UniProtKB-UniRule"/>
</dbReference>
<dbReference type="GO" id="GO:0031071">
    <property type="term" value="F:cysteine desulfurase activity"/>
    <property type="evidence" value="ECO:0007669"/>
    <property type="project" value="UniProtKB-UniRule"/>
</dbReference>
<dbReference type="GO" id="GO:0046872">
    <property type="term" value="F:metal ion binding"/>
    <property type="evidence" value="ECO:0007669"/>
    <property type="project" value="UniProtKB-KW"/>
</dbReference>
<dbReference type="GO" id="GO:0030170">
    <property type="term" value="F:pyridoxal phosphate binding"/>
    <property type="evidence" value="ECO:0007669"/>
    <property type="project" value="UniProtKB-UniRule"/>
</dbReference>
<dbReference type="GO" id="GO:0044571">
    <property type="term" value="P:[2Fe-2S] cluster assembly"/>
    <property type="evidence" value="ECO:0007669"/>
    <property type="project" value="UniProtKB-UniRule"/>
</dbReference>
<dbReference type="FunFam" id="3.40.640.10:FF:000003">
    <property type="entry name" value="Cysteine desulfurase IscS"/>
    <property type="match status" value="1"/>
</dbReference>
<dbReference type="FunFam" id="3.90.1150.10:FF:000002">
    <property type="entry name" value="Cysteine desulfurase IscS"/>
    <property type="match status" value="1"/>
</dbReference>
<dbReference type="Gene3D" id="3.90.1150.10">
    <property type="entry name" value="Aspartate Aminotransferase, domain 1"/>
    <property type="match status" value="1"/>
</dbReference>
<dbReference type="Gene3D" id="3.40.640.10">
    <property type="entry name" value="Type I PLP-dependent aspartate aminotransferase-like (Major domain)"/>
    <property type="match status" value="1"/>
</dbReference>
<dbReference type="HAMAP" id="MF_00331">
    <property type="entry name" value="Cys_desulf_IscS"/>
    <property type="match status" value="1"/>
</dbReference>
<dbReference type="InterPro" id="IPR000192">
    <property type="entry name" value="Aminotrans_V_dom"/>
</dbReference>
<dbReference type="InterPro" id="IPR020578">
    <property type="entry name" value="Aminotrans_V_PyrdxlP_BS"/>
</dbReference>
<dbReference type="InterPro" id="IPR010240">
    <property type="entry name" value="Cys_deSase_IscS"/>
</dbReference>
<dbReference type="InterPro" id="IPR016454">
    <property type="entry name" value="Cysteine_dSase"/>
</dbReference>
<dbReference type="InterPro" id="IPR015424">
    <property type="entry name" value="PyrdxlP-dep_Trfase"/>
</dbReference>
<dbReference type="InterPro" id="IPR015421">
    <property type="entry name" value="PyrdxlP-dep_Trfase_major"/>
</dbReference>
<dbReference type="InterPro" id="IPR015422">
    <property type="entry name" value="PyrdxlP-dep_Trfase_small"/>
</dbReference>
<dbReference type="NCBIfam" id="TIGR02006">
    <property type="entry name" value="IscS"/>
    <property type="match status" value="1"/>
</dbReference>
<dbReference type="NCBIfam" id="NF002806">
    <property type="entry name" value="PRK02948.1"/>
    <property type="match status" value="1"/>
</dbReference>
<dbReference type="NCBIfam" id="NF010611">
    <property type="entry name" value="PRK14012.1"/>
    <property type="match status" value="1"/>
</dbReference>
<dbReference type="PANTHER" id="PTHR11601:SF34">
    <property type="entry name" value="CYSTEINE DESULFURASE"/>
    <property type="match status" value="1"/>
</dbReference>
<dbReference type="PANTHER" id="PTHR11601">
    <property type="entry name" value="CYSTEINE DESULFURYLASE FAMILY MEMBER"/>
    <property type="match status" value="1"/>
</dbReference>
<dbReference type="Pfam" id="PF00266">
    <property type="entry name" value="Aminotran_5"/>
    <property type="match status" value="1"/>
</dbReference>
<dbReference type="PIRSF" id="PIRSF005572">
    <property type="entry name" value="NifS"/>
    <property type="match status" value="1"/>
</dbReference>
<dbReference type="SUPFAM" id="SSF53383">
    <property type="entry name" value="PLP-dependent transferases"/>
    <property type="match status" value="1"/>
</dbReference>
<dbReference type="PROSITE" id="PS00595">
    <property type="entry name" value="AA_TRANSFER_CLASS_5"/>
    <property type="match status" value="1"/>
</dbReference>
<gene>
    <name evidence="1" type="primary">iscS</name>
    <name type="ordered locus">SPAB_00390</name>
</gene>
<sequence>MKLPIYLDYSATTPVDPRVAEKMMQFLTLDGTFGNPASRSHRFGWQAEEAVDIARNQIAELVGADPREIVFTSGATESDNLAIKGAANFYQKKGKHIITSKTEHKAVLDTCRQLEREGFEVTYLAPQRNGIIDLNELEAAMRDDTILVSIMHVNNEIGVVQDIATIGEMCRARGIIYHVDATQSVGKLPIDLSQLKVDLMSFSGHKIYGPKGIGALYVRRKPRIRIEAQMHGGGHERGMRSGTLPVHQIVGMGEAYRIAKEEMETEMARLRGLRNRLWNGIKDIEEVYLNGDLEQGAPNILNVSFNYVEGESLIMALKDLAVSSGSACTSASLEPSYVLRALGMNDELAHSSIRFSLGRFTTEEEIDYTIDLVRKSIGRLRDLSPLWEMYKQGVDLNSIEWAHH</sequence>
<organism>
    <name type="scientific">Salmonella paratyphi B (strain ATCC BAA-1250 / SPB7)</name>
    <dbReference type="NCBI Taxonomy" id="1016998"/>
    <lineage>
        <taxon>Bacteria</taxon>
        <taxon>Pseudomonadati</taxon>
        <taxon>Pseudomonadota</taxon>
        <taxon>Gammaproteobacteria</taxon>
        <taxon>Enterobacterales</taxon>
        <taxon>Enterobacteriaceae</taxon>
        <taxon>Salmonella</taxon>
    </lineage>
</organism>
<keyword id="KW-0001">2Fe-2S</keyword>
<keyword id="KW-0963">Cytoplasm</keyword>
<keyword id="KW-0408">Iron</keyword>
<keyword id="KW-0411">Iron-sulfur</keyword>
<keyword id="KW-0479">Metal-binding</keyword>
<keyword id="KW-0663">Pyridoxal phosphate</keyword>
<keyword id="KW-0808">Transferase</keyword>
<feature type="chain" id="PRO_1000079210" description="Cysteine desulfurase IscS">
    <location>
        <begin position="1"/>
        <end position="404"/>
    </location>
</feature>
<feature type="active site" description="Cysteine persulfide intermediate" evidence="1">
    <location>
        <position position="328"/>
    </location>
</feature>
<feature type="binding site" evidence="1">
    <location>
        <begin position="75"/>
        <end position="76"/>
    </location>
    <ligand>
        <name>pyridoxal 5'-phosphate</name>
        <dbReference type="ChEBI" id="CHEBI:597326"/>
    </ligand>
</feature>
<feature type="binding site" evidence="1">
    <location>
        <position position="155"/>
    </location>
    <ligand>
        <name>pyridoxal 5'-phosphate</name>
        <dbReference type="ChEBI" id="CHEBI:597326"/>
    </ligand>
</feature>
<feature type="binding site" evidence="1">
    <location>
        <position position="183"/>
    </location>
    <ligand>
        <name>pyridoxal 5'-phosphate</name>
        <dbReference type="ChEBI" id="CHEBI:597326"/>
    </ligand>
</feature>
<feature type="binding site" evidence="1">
    <location>
        <begin position="203"/>
        <end position="205"/>
    </location>
    <ligand>
        <name>pyridoxal 5'-phosphate</name>
        <dbReference type="ChEBI" id="CHEBI:597326"/>
    </ligand>
</feature>
<feature type="binding site" evidence="1">
    <location>
        <position position="243"/>
    </location>
    <ligand>
        <name>pyridoxal 5'-phosphate</name>
        <dbReference type="ChEBI" id="CHEBI:597326"/>
    </ligand>
</feature>
<feature type="binding site" description="via persulfide group" evidence="1">
    <location>
        <position position="328"/>
    </location>
    <ligand>
        <name>[2Fe-2S] cluster</name>
        <dbReference type="ChEBI" id="CHEBI:190135"/>
        <note>ligand shared with IscU</note>
    </ligand>
</feature>
<feature type="modified residue" description="N6-(pyridoxal phosphate)lysine" evidence="1">
    <location>
        <position position="206"/>
    </location>
</feature>
<accession>A9N1X5</accession>
<comment type="function">
    <text evidence="1">Master enzyme that delivers sulfur to a number of partners involved in Fe-S cluster assembly, tRNA modification or cofactor biosynthesis. Catalyzes the removal of elemental sulfur and selenium atoms from cysteine and selenocysteine to produce alanine. Functions as a sulfur delivery protein for Fe-S cluster synthesis onto IscU, an Fe-S scaffold assembly protein, as well as other S acceptor proteins. Also functions as a selenium delivery protein in the pathway for the biosynthesis of selenophosphate.</text>
</comment>
<comment type="catalytic activity">
    <reaction evidence="1">
        <text>(sulfur carrier)-H + L-cysteine = (sulfur carrier)-SH + L-alanine</text>
        <dbReference type="Rhea" id="RHEA:43892"/>
        <dbReference type="Rhea" id="RHEA-COMP:14737"/>
        <dbReference type="Rhea" id="RHEA-COMP:14739"/>
        <dbReference type="ChEBI" id="CHEBI:29917"/>
        <dbReference type="ChEBI" id="CHEBI:35235"/>
        <dbReference type="ChEBI" id="CHEBI:57972"/>
        <dbReference type="ChEBI" id="CHEBI:64428"/>
        <dbReference type="EC" id="2.8.1.7"/>
    </reaction>
</comment>
<comment type="cofactor">
    <cofactor evidence="1">
        <name>pyridoxal 5'-phosphate</name>
        <dbReference type="ChEBI" id="CHEBI:597326"/>
    </cofactor>
</comment>
<comment type="pathway">
    <text evidence="1">Cofactor biosynthesis; iron-sulfur cluster biosynthesis.</text>
</comment>
<comment type="subunit">
    <text evidence="1">Homodimer. Forms a heterotetramer with IscU, interacts with other sulfur acceptors.</text>
</comment>
<comment type="subcellular location">
    <subcellularLocation>
        <location evidence="1">Cytoplasm</location>
    </subcellularLocation>
</comment>
<comment type="similarity">
    <text evidence="1">Belongs to the class-V pyridoxal-phosphate-dependent aminotransferase family. NifS/IscS subfamily.</text>
</comment>
<proteinExistence type="inferred from homology"/>
<name>ISCS_SALPB</name>